<gene>
    <name type="ordered locus">BURPS1710b_1082</name>
</gene>
<name>Y1082_BURP1</name>
<organism>
    <name type="scientific">Burkholderia pseudomallei (strain 1710b)</name>
    <dbReference type="NCBI Taxonomy" id="320372"/>
    <lineage>
        <taxon>Bacteria</taxon>
        <taxon>Pseudomonadati</taxon>
        <taxon>Pseudomonadota</taxon>
        <taxon>Betaproteobacteria</taxon>
        <taxon>Burkholderiales</taxon>
        <taxon>Burkholderiaceae</taxon>
        <taxon>Burkholderia</taxon>
        <taxon>pseudomallei group</taxon>
    </lineage>
</organism>
<comment type="similarity">
    <text evidence="1">Belongs to the UPF0434 family.</text>
</comment>
<reference key="1">
    <citation type="journal article" date="2010" name="Genome Biol. Evol.">
        <title>Continuing evolution of Burkholderia mallei through genome reduction and large-scale rearrangements.</title>
        <authorList>
            <person name="Losada L."/>
            <person name="Ronning C.M."/>
            <person name="DeShazer D."/>
            <person name="Woods D."/>
            <person name="Fedorova N."/>
            <person name="Kim H.S."/>
            <person name="Shabalina S.A."/>
            <person name="Pearson T.R."/>
            <person name="Brinkac L."/>
            <person name="Tan P."/>
            <person name="Nandi T."/>
            <person name="Crabtree J."/>
            <person name="Badger J."/>
            <person name="Beckstrom-Sternberg S."/>
            <person name="Saqib M."/>
            <person name="Schutzer S.E."/>
            <person name="Keim P."/>
            <person name="Nierman W.C."/>
        </authorList>
    </citation>
    <scope>NUCLEOTIDE SEQUENCE [LARGE SCALE GENOMIC DNA]</scope>
    <source>
        <strain>1710b</strain>
    </source>
</reference>
<accession>Q3JVA9</accession>
<proteinExistence type="inferred from homology"/>
<sequence length="68" mass="7409">MDARLLEILVCPICKGPLHYDRGAQELVCHADKLAYPIRDGIPVMLVDEARQTVEGTPVDPAGPARGR</sequence>
<evidence type="ECO:0000255" key="1">
    <source>
        <dbReference type="HAMAP-Rule" id="MF_01187"/>
    </source>
</evidence>
<protein>
    <recommendedName>
        <fullName evidence="1">UPF0434 protein BURPS1710b_1082</fullName>
    </recommendedName>
</protein>
<dbReference type="EMBL" id="CP000124">
    <property type="protein sequence ID" value="ABA49313.1"/>
    <property type="molecule type" value="Genomic_DNA"/>
</dbReference>
<dbReference type="RefSeq" id="WP_004196455.1">
    <property type="nucleotide sequence ID" value="NC_007434.1"/>
</dbReference>
<dbReference type="SMR" id="Q3JVA9"/>
<dbReference type="EnsemblBacteria" id="ABA49313">
    <property type="protein sequence ID" value="ABA49313"/>
    <property type="gene ID" value="BURPS1710b_1082"/>
</dbReference>
<dbReference type="KEGG" id="bpm:BURPS1710b_1082"/>
<dbReference type="HOGENOM" id="CLU_155659_3_0_4"/>
<dbReference type="Proteomes" id="UP000002700">
    <property type="component" value="Chromosome I"/>
</dbReference>
<dbReference type="GO" id="GO:0005829">
    <property type="term" value="C:cytosol"/>
    <property type="evidence" value="ECO:0007669"/>
    <property type="project" value="TreeGrafter"/>
</dbReference>
<dbReference type="FunFam" id="2.20.25.10:FF:000002">
    <property type="entry name" value="UPF0434 protein YcaR"/>
    <property type="match status" value="1"/>
</dbReference>
<dbReference type="Gene3D" id="2.20.25.10">
    <property type="match status" value="1"/>
</dbReference>
<dbReference type="HAMAP" id="MF_01187">
    <property type="entry name" value="UPF0434"/>
    <property type="match status" value="1"/>
</dbReference>
<dbReference type="InterPro" id="IPR005651">
    <property type="entry name" value="Trm112-like"/>
</dbReference>
<dbReference type="NCBIfam" id="TIGR01053">
    <property type="entry name" value="LSD1"/>
    <property type="match status" value="1"/>
</dbReference>
<dbReference type="PANTHER" id="PTHR33505:SF4">
    <property type="entry name" value="PROTEIN PREY, MITOCHONDRIAL"/>
    <property type="match status" value="1"/>
</dbReference>
<dbReference type="PANTHER" id="PTHR33505">
    <property type="entry name" value="ZGC:162634"/>
    <property type="match status" value="1"/>
</dbReference>
<dbReference type="Pfam" id="PF03966">
    <property type="entry name" value="Trm112p"/>
    <property type="match status" value="1"/>
</dbReference>
<dbReference type="SUPFAM" id="SSF158997">
    <property type="entry name" value="Trm112p-like"/>
    <property type="match status" value="1"/>
</dbReference>
<feature type="chain" id="PRO_0000291076" description="UPF0434 protein BURPS1710b_1082">
    <location>
        <begin position="1"/>
        <end position="68"/>
    </location>
</feature>